<name>CYB6_JASNU</name>
<dbReference type="EMBL" id="DQ673255">
    <property type="protein sequence ID" value="ABG74656.1"/>
    <property type="molecule type" value="Genomic_DNA"/>
</dbReference>
<dbReference type="RefSeq" id="YP_778519.1">
    <property type="nucleotide sequence ID" value="NC_008407.1"/>
</dbReference>
<dbReference type="SMR" id="Q06RA2"/>
<dbReference type="GeneID" id="4319738"/>
<dbReference type="GO" id="GO:0009535">
    <property type="term" value="C:chloroplast thylakoid membrane"/>
    <property type="evidence" value="ECO:0007669"/>
    <property type="project" value="UniProtKB-SubCell"/>
</dbReference>
<dbReference type="GO" id="GO:0045158">
    <property type="term" value="F:electron transporter, transferring electrons within cytochrome b6/f complex of photosystem II activity"/>
    <property type="evidence" value="ECO:0007669"/>
    <property type="project" value="UniProtKB-UniRule"/>
</dbReference>
<dbReference type="GO" id="GO:0046872">
    <property type="term" value="F:metal ion binding"/>
    <property type="evidence" value="ECO:0007669"/>
    <property type="project" value="UniProtKB-KW"/>
</dbReference>
<dbReference type="GO" id="GO:0016491">
    <property type="term" value="F:oxidoreductase activity"/>
    <property type="evidence" value="ECO:0007669"/>
    <property type="project" value="InterPro"/>
</dbReference>
<dbReference type="GO" id="GO:0015979">
    <property type="term" value="P:photosynthesis"/>
    <property type="evidence" value="ECO:0007669"/>
    <property type="project" value="UniProtKB-UniRule"/>
</dbReference>
<dbReference type="GO" id="GO:0022904">
    <property type="term" value="P:respiratory electron transport chain"/>
    <property type="evidence" value="ECO:0007669"/>
    <property type="project" value="InterPro"/>
</dbReference>
<dbReference type="CDD" id="cd00284">
    <property type="entry name" value="Cytochrome_b_N"/>
    <property type="match status" value="1"/>
</dbReference>
<dbReference type="FunFam" id="1.20.810.10:FF:000001">
    <property type="entry name" value="Cytochrome b6"/>
    <property type="match status" value="1"/>
</dbReference>
<dbReference type="Gene3D" id="1.20.810.10">
    <property type="entry name" value="Cytochrome Bc1 Complex, Chain C"/>
    <property type="match status" value="1"/>
</dbReference>
<dbReference type="HAMAP" id="MF_00633">
    <property type="entry name" value="Cytb6_f_cytb6"/>
    <property type="match status" value="1"/>
</dbReference>
<dbReference type="InterPro" id="IPR005797">
    <property type="entry name" value="Cyt_b/b6_N"/>
</dbReference>
<dbReference type="InterPro" id="IPR023530">
    <property type="entry name" value="Cyt_B6_PetB"/>
</dbReference>
<dbReference type="InterPro" id="IPR027387">
    <property type="entry name" value="Cytb/b6-like_sf"/>
</dbReference>
<dbReference type="InterPro" id="IPR048259">
    <property type="entry name" value="Cytochrome_b_N_euk/bac"/>
</dbReference>
<dbReference type="InterPro" id="IPR016174">
    <property type="entry name" value="Di-haem_cyt_TM"/>
</dbReference>
<dbReference type="NCBIfam" id="NF002990">
    <property type="entry name" value="PRK03735.1"/>
    <property type="match status" value="1"/>
</dbReference>
<dbReference type="PANTHER" id="PTHR19271">
    <property type="entry name" value="CYTOCHROME B"/>
    <property type="match status" value="1"/>
</dbReference>
<dbReference type="PANTHER" id="PTHR19271:SF16">
    <property type="entry name" value="CYTOCHROME B"/>
    <property type="match status" value="1"/>
</dbReference>
<dbReference type="Pfam" id="PF00033">
    <property type="entry name" value="Cytochrome_B"/>
    <property type="match status" value="1"/>
</dbReference>
<dbReference type="PIRSF" id="PIRSF000032">
    <property type="entry name" value="Cytochrome_b6"/>
    <property type="match status" value="1"/>
</dbReference>
<dbReference type="SUPFAM" id="SSF81342">
    <property type="entry name" value="Transmembrane di-heme cytochromes"/>
    <property type="match status" value="1"/>
</dbReference>
<dbReference type="PROSITE" id="PS51002">
    <property type="entry name" value="CYTB_NTER"/>
    <property type="match status" value="1"/>
</dbReference>
<protein>
    <recommendedName>
        <fullName evidence="1">Cytochrome b6</fullName>
    </recommendedName>
</protein>
<organism>
    <name type="scientific">Jasminum nudiflorum</name>
    <name type="common">Winter jasmine</name>
    <dbReference type="NCBI Taxonomy" id="126431"/>
    <lineage>
        <taxon>Eukaryota</taxon>
        <taxon>Viridiplantae</taxon>
        <taxon>Streptophyta</taxon>
        <taxon>Embryophyta</taxon>
        <taxon>Tracheophyta</taxon>
        <taxon>Spermatophyta</taxon>
        <taxon>Magnoliopsida</taxon>
        <taxon>eudicotyledons</taxon>
        <taxon>Gunneridae</taxon>
        <taxon>Pentapetalae</taxon>
        <taxon>asterids</taxon>
        <taxon>lamiids</taxon>
        <taxon>Lamiales</taxon>
        <taxon>Oleaceae</taxon>
        <taxon>Jasmineae</taxon>
        <taxon>Jasminum</taxon>
    </lineage>
</organism>
<comment type="function">
    <text evidence="1">Component of the cytochrome b6-f complex, which mediates electron transfer between photosystem II (PSII) and photosystem I (PSI), cyclic electron flow around PSI, and state transitions.</text>
</comment>
<comment type="cofactor">
    <cofactor evidence="1">
        <name>heme b</name>
        <dbReference type="ChEBI" id="CHEBI:60344"/>
    </cofactor>
    <text evidence="1">Binds 2 heme b groups non-covalently with two histidine residues as axial ligands.</text>
</comment>
<comment type="cofactor">
    <cofactor evidence="1">
        <name>heme c</name>
        <dbReference type="ChEBI" id="CHEBI:61717"/>
    </cofactor>
    <text evidence="1">Binds one heme group covalently by a single cysteine link with no axial amino acid ligand. This heme was named heme ci.</text>
</comment>
<comment type="subunit">
    <text evidence="1">The 4 large subunits of the cytochrome b6-f complex are cytochrome b6, subunit IV (17 kDa polypeptide, PetD), cytochrome f and the Rieske protein, while the 4 small subunits are PetG, PetL, PetM and PetN. The complex functions as a dimer.</text>
</comment>
<comment type="subcellular location">
    <subcellularLocation>
        <location evidence="1">Plastid</location>
        <location evidence="1">Chloroplast thylakoid membrane</location>
        <topology evidence="1">Multi-pass membrane protein</topology>
    </subcellularLocation>
</comment>
<comment type="miscellaneous">
    <text evidence="1">Heme 1 (or BH or b566) is high-potential and absorbs at about 566 nm, and heme 2 (or BL or b562) is low-potential and absorbs at about 562 nm.</text>
</comment>
<comment type="similarity">
    <text evidence="1">Belongs to the cytochrome b family. PetB subfamily.</text>
</comment>
<accession>Q06RA2</accession>
<proteinExistence type="inferred from homology"/>
<gene>
    <name evidence="1" type="primary">petB</name>
    <name type="ORF">JNC0833</name>
</gene>
<evidence type="ECO:0000255" key="1">
    <source>
        <dbReference type="HAMAP-Rule" id="MF_00633"/>
    </source>
</evidence>
<sequence length="215" mass="24105">MSKVYDWFEERLEIQAIADDITSKYVPPHVNIFYCLGGITLTCFLVQVATGFAMTFYYRPTVTEAFASVQYIMTEANFGWLIRSVHRWSASMMVLMMILHVFRVYLTGGFKKPRELTWVTGVVLGVLTASFGVTGYSLPRDQIGYWAVKIVTGVPEAIPVIGAPLVELLRGSASVGQSTLTRFYSLHTFVLPLLTAVFMLMHFPMIRKQGISGPL</sequence>
<keyword id="KW-0150">Chloroplast</keyword>
<keyword id="KW-0249">Electron transport</keyword>
<keyword id="KW-0349">Heme</keyword>
<keyword id="KW-0408">Iron</keyword>
<keyword id="KW-0472">Membrane</keyword>
<keyword id="KW-0479">Metal-binding</keyword>
<keyword id="KW-0602">Photosynthesis</keyword>
<keyword id="KW-0934">Plastid</keyword>
<keyword id="KW-0793">Thylakoid</keyword>
<keyword id="KW-0812">Transmembrane</keyword>
<keyword id="KW-1133">Transmembrane helix</keyword>
<keyword id="KW-0813">Transport</keyword>
<reference key="1">
    <citation type="journal article" date="2007" name="Mol. Biol. Evol.">
        <title>Gene relocations within chloroplast genomes of Jasminum and Menodora (Oleaceae) are due to multiple, overlapping inversions.</title>
        <authorList>
            <person name="Lee H.-L."/>
            <person name="Jansen R.K."/>
            <person name="Chumley T.W."/>
            <person name="Kim K.-J."/>
        </authorList>
    </citation>
    <scope>NUCLEOTIDE SEQUENCE [LARGE SCALE GENOMIC DNA]</scope>
</reference>
<geneLocation type="chloroplast"/>
<feature type="chain" id="PRO_0000275320" description="Cytochrome b6">
    <location>
        <begin position="1"/>
        <end position="215"/>
    </location>
</feature>
<feature type="transmembrane region" description="Helical" evidence="1">
    <location>
        <begin position="32"/>
        <end position="52"/>
    </location>
</feature>
<feature type="transmembrane region" description="Helical" evidence="1">
    <location>
        <begin position="90"/>
        <end position="110"/>
    </location>
</feature>
<feature type="transmembrane region" description="Helical" evidence="1">
    <location>
        <begin position="116"/>
        <end position="136"/>
    </location>
</feature>
<feature type="transmembrane region" description="Helical" evidence="1">
    <location>
        <begin position="186"/>
        <end position="206"/>
    </location>
</feature>
<feature type="binding site" description="covalent" evidence="1">
    <location>
        <position position="35"/>
    </location>
    <ligand>
        <name>heme c</name>
        <dbReference type="ChEBI" id="CHEBI:61717"/>
    </ligand>
</feature>
<feature type="binding site" description="axial binding residue" evidence="1">
    <location>
        <position position="86"/>
    </location>
    <ligand>
        <name>heme b</name>
        <dbReference type="ChEBI" id="CHEBI:60344"/>
        <label>2</label>
    </ligand>
    <ligandPart>
        <name>Fe</name>
        <dbReference type="ChEBI" id="CHEBI:18248"/>
    </ligandPart>
</feature>
<feature type="binding site" description="axial binding residue" evidence="1">
    <location>
        <position position="100"/>
    </location>
    <ligand>
        <name>heme b</name>
        <dbReference type="ChEBI" id="CHEBI:60344"/>
        <label>1</label>
    </ligand>
    <ligandPart>
        <name>Fe</name>
        <dbReference type="ChEBI" id="CHEBI:18248"/>
    </ligandPart>
</feature>
<feature type="binding site" description="axial binding residue" evidence="1">
    <location>
        <position position="187"/>
    </location>
    <ligand>
        <name>heme b</name>
        <dbReference type="ChEBI" id="CHEBI:60344"/>
        <label>2</label>
    </ligand>
    <ligandPart>
        <name>Fe</name>
        <dbReference type="ChEBI" id="CHEBI:18248"/>
    </ligandPart>
</feature>
<feature type="binding site" description="axial binding residue" evidence="1">
    <location>
        <position position="202"/>
    </location>
    <ligand>
        <name>heme b</name>
        <dbReference type="ChEBI" id="CHEBI:60344"/>
        <label>1</label>
    </ligand>
    <ligandPart>
        <name>Fe</name>
        <dbReference type="ChEBI" id="CHEBI:18248"/>
    </ligandPart>
</feature>